<proteinExistence type="inferred from homology"/>
<protein>
    <recommendedName>
        <fullName evidence="1">Small ribosomal subunit protein uS4</fullName>
    </recommendedName>
    <alternativeName>
        <fullName evidence="2">30S ribosomal protein S4</fullName>
    </alternativeName>
</protein>
<organism>
    <name type="scientific">Chloroflexus aurantiacus (strain ATCC 29366 / DSM 635 / J-10-fl)</name>
    <dbReference type="NCBI Taxonomy" id="324602"/>
    <lineage>
        <taxon>Bacteria</taxon>
        <taxon>Bacillati</taxon>
        <taxon>Chloroflexota</taxon>
        <taxon>Chloroflexia</taxon>
        <taxon>Chloroflexales</taxon>
        <taxon>Chloroflexineae</taxon>
        <taxon>Chloroflexaceae</taxon>
        <taxon>Chloroflexus</taxon>
    </lineage>
</organism>
<name>RS4_CHLAA</name>
<sequence length="206" mass="23411">MARYIGPVGKVSRRLGIGITEKGLRILNKRSDPPGQHGAAARRRQLSDYGMQLREKQKAKFLYGVLERQFRRLFEQASRRSGVTGEYLLSLLERRLDNVVYRLGFATTRAQARQLVNHGHIVVDGRKTNIPSYTVKVGQVIAVRPQSRSRTYFKNLVDSGVLNKHRAPEWLRLNAAELSGTVVALPRREDAEAGINEQLIVEFYSR</sequence>
<accession>A9WH92</accession>
<dbReference type="EMBL" id="CP000909">
    <property type="protein sequence ID" value="ABY35604.1"/>
    <property type="molecule type" value="Genomic_DNA"/>
</dbReference>
<dbReference type="RefSeq" id="WP_012258257.1">
    <property type="nucleotide sequence ID" value="NC_010175.1"/>
</dbReference>
<dbReference type="RefSeq" id="YP_001635993.1">
    <property type="nucleotide sequence ID" value="NC_010175.1"/>
</dbReference>
<dbReference type="SMR" id="A9WH92"/>
<dbReference type="FunCoup" id="A9WH92">
    <property type="interactions" value="493"/>
</dbReference>
<dbReference type="STRING" id="324602.Caur_2395"/>
<dbReference type="EnsemblBacteria" id="ABY35604">
    <property type="protein sequence ID" value="ABY35604"/>
    <property type="gene ID" value="Caur_2395"/>
</dbReference>
<dbReference type="KEGG" id="cau:Caur_2395"/>
<dbReference type="PATRIC" id="fig|324602.8.peg.2709"/>
<dbReference type="eggNOG" id="COG0522">
    <property type="taxonomic scope" value="Bacteria"/>
</dbReference>
<dbReference type="HOGENOM" id="CLU_092403_0_1_0"/>
<dbReference type="InParanoid" id="A9WH92"/>
<dbReference type="Proteomes" id="UP000002008">
    <property type="component" value="Chromosome"/>
</dbReference>
<dbReference type="GO" id="GO:0015935">
    <property type="term" value="C:small ribosomal subunit"/>
    <property type="evidence" value="ECO:0000318"/>
    <property type="project" value="GO_Central"/>
</dbReference>
<dbReference type="GO" id="GO:0019843">
    <property type="term" value="F:rRNA binding"/>
    <property type="evidence" value="ECO:0000318"/>
    <property type="project" value="GO_Central"/>
</dbReference>
<dbReference type="GO" id="GO:0003735">
    <property type="term" value="F:structural constituent of ribosome"/>
    <property type="evidence" value="ECO:0000318"/>
    <property type="project" value="GO_Central"/>
</dbReference>
<dbReference type="GO" id="GO:0042274">
    <property type="term" value="P:ribosomal small subunit biogenesis"/>
    <property type="evidence" value="ECO:0000318"/>
    <property type="project" value="GO_Central"/>
</dbReference>
<dbReference type="GO" id="GO:0006412">
    <property type="term" value="P:translation"/>
    <property type="evidence" value="ECO:0007669"/>
    <property type="project" value="UniProtKB-UniRule"/>
</dbReference>
<dbReference type="CDD" id="cd00165">
    <property type="entry name" value="S4"/>
    <property type="match status" value="1"/>
</dbReference>
<dbReference type="FunFam" id="3.10.290.10:FF:000001">
    <property type="entry name" value="30S ribosomal protein S4"/>
    <property type="match status" value="1"/>
</dbReference>
<dbReference type="Gene3D" id="1.10.1050.10">
    <property type="entry name" value="Ribosomal Protein S4 Delta 41, Chain A, domain 1"/>
    <property type="match status" value="1"/>
</dbReference>
<dbReference type="Gene3D" id="3.10.290.10">
    <property type="entry name" value="RNA-binding S4 domain"/>
    <property type="match status" value="1"/>
</dbReference>
<dbReference type="HAMAP" id="MF_01306_B">
    <property type="entry name" value="Ribosomal_uS4_B"/>
    <property type="match status" value="1"/>
</dbReference>
<dbReference type="InterPro" id="IPR022801">
    <property type="entry name" value="Ribosomal_uS4"/>
</dbReference>
<dbReference type="InterPro" id="IPR005709">
    <property type="entry name" value="Ribosomal_uS4_bac-type"/>
</dbReference>
<dbReference type="InterPro" id="IPR018079">
    <property type="entry name" value="Ribosomal_uS4_CS"/>
</dbReference>
<dbReference type="InterPro" id="IPR001912">
    <property type="entry name" value="Ribosomal_uS4_N"/>
</dbReference>
<dbReference type="InterPro" id="IPR002942">
    <property type="entry name" value="S4_RNA-bd"/>
</dbReference>
<dbReference type="InterPro" id="IPR036986">
    <property type="entry name" value="S4_RNA-bd_sf"/>
</dbReference>
<dbReference type="NCBIfam" id="NF003717">
    <property type="entry name" value="PRK05327.1"/>
    <property type="match status" value="1"/>
</dbReference>
<dbReference type="NCBIfam" id="TIGR01017">
    <property type="entry name" value="rpsD_bact"/>
    <property type="match status" value="1"/>
</dbReference>
<dbReference type="PANTHER" id="PTHR11831">
    <property type="entry name" value="30S 40S RIBOSOMAL PROTEIN"/>
    <property type="match status" value="1"/>
</dbReference>
<dbReference type="PANTHER" id="PTHR11831:SF4">
    <property type="entry name" value="SMALL RIBOSOMAL SUBUNIT PROTEIN US4M"/>
    <property type="match status" value="1"/>
</dbReference>
<dbReference type="Pfam" id="PF00163">
    <property type="entry name" value="Ribosomal_S4"/>
    <property type="match status" value="1"/>
</dbReference>
<dbReference type="Pfam" id="PF01479">
    <property type="entry name" value="S4"/>
    <property type="match status" value="1"/>
</dbReference>
<dbReference type="SMART" id="SM01390">
    <property type="entry name" value="Ribosomal_S4"/>
    <property type="match status" value="1"/>
</dbReference>
<dbReference type="SMART" id="SM00363">
    <property type="entry name" value="S4"/>
    <property type="match status" value="1"/>
</dbReference>
<dbReference type="SUPFAM" id="SSF55174">
    <property type="entry name" value="Alpha-L RNA-binding motif"/>
    <property type="match status" value="1"/>
</dbReference>
<dbReference type="PROSITE" id="PS00632">
    <property type="entry name" value="RIBOSOMAL_S4"/>
    <property type="match status" value="1"/>
</dbReference>
<dbReference type="PROSITE" id="PS50889">
    <property type="entry name" value="S4"/>
    <property type="match status" value="1"/>
</dbReference>
<keyword id="KW-1185">Reference proteome</keyword>
<keyword id="KW-0687">Ribonucleoprotein</keyword>
<keyword id="KW-0689">Ribosomal protein</keyword>
<keyword id="KW-0694">RNA-binding</keyword>
<keyword id="KW-0699">rRNA-binding</keyword>
<feature type="chain" id="PRO_1000085965" description="Small ribosomal subunit protein uS4">
    <location>
        <begin position="1"/>
        <end position="206"/>
    </location>
</feature>
<feature type="domain" description="S4 RNA-binding" evidence="1">
    <location>
        <begin position="94"/>
        <end position="157"/>
    </location>
</feature>
<reference key="1">
    <citation type="journal article" date="2011" name="BMC Genomics">
        <title>Complete genome sequence of the filamentous anoxygenic phototrophic bacterium Chloroflexus aurantiacus.</title>
        <authorList>
            <person name="Tang K.H."/>
            <person name="Barry K."/>
            <person name="Chertkov O."/>
            <person name="Dalin E."/>
            <person name="Han C.S."/>
            <person name="Hauser L.J."/>
            <person name="Honchak B.M."/>
            <person name="Karbach L.E."/>
            <person name="Land M.L."/>
            <person name="Lapidus A."/>
            <person name="Larimer F.W."/>
            <person name="Mikhailova N."/>
            <person name="Pitluck S."/>
            <person name="Pierson B.K."/>
            <person name="Blankenship R.E."/>
        </authorList>
    </citation>
    <scope>NUCLEOTIDE SEQUENCE [LARGE SCALE GENOMIC DNA]</scope>
    <source>
        <strain>ATCC 29366 / DSM 635 / J-10-fl</strain>
    </source>
</reference>
<evidence type="ECO:0000255" key="1">
    <source>
        <dbReference type="HAMAP-Rule" id="MF_01306"/>
    </source>
</evidence>
<evidence type="ECO:0000305" key="2"/>
<comment type="function">
    <text evidence="1">One of the primary rRNA binding proteins, it binds directly to 16S rRNA where it nucleates assembly of the body of the 30S subunit.</text>
</comment>
<comment type="function">
    <text evidence="1">With S5 and S12 plays an important role in translational accuracy.</text>
</comment>
<comment type="subunit">
    <text evidence="1">Part of the 30S ribosomal subunit. Contacts protein S5. The interaction surface between S4 and S5 is involved in control of translational fidelity.</text>
</comment>
<comment type="similarity">
    <text evidence="1">Belongs to the universal ribosomal protein uS4 family.</text>
</comment>
<gene>
    <name evidence="1" type="primary">rpsD</name>
    <name type="ordered locus">Caur_2395</name>
</gene>